<accession>P32528</accession>
<accession>D6VQK5</accession>
<feature type="chain" id="PRO_0000146832" description="Urea amidolyase">
    <location>
        <begin position="1"/>
        <end position="1835"/>
    </location>
</feature>
<feature type="domain" description="Biotin carboxylation">
    <location>
        <begin position="632"/>
        <end position="1075"/>
    </location>
</feature>
<feature type="domain" description="ATP-grasp" evidence="2">
    <location>
        <begin position="751"/>
        <end position="948"/>
    </location>
</feature>
<feature type="domain" description="Biotinyl-binding" evidence="3">
    <location>
        <begin position="1754"/>
        <end position="1832"/>
    </location>
</feature>
<feature type="binding site" evidence="2">
    <location>
        <begin position="122"/>
        <end position="129"/>
    </location>
    <ligand>
        <name>ATP</name>
        <dbReference type="ChEBI" id="CHEBI:30616"/>
    </ligand>
</feature>
<feature type="binding site" evidence="1">
    <location>
        <position position="747"/>
    </location>
    <ligand>
        <name>ATP</name>
        <dbReference type="ChEBI" id="CHEBI:30616"/>
    </ligand>
</feature>
<feature type="binding site" evidence="1">
    <location>
        <position position="830"/>
    </location>
    <ligand>
        <name>ATP</name>
        <dbReference type="ChEBI" id="CHEBI:30616"/>
    </ligand>
</feature>
<feature type="binding site" evidence="1">
    <location>
        <position position="865"/>
    </location>
    <ligand>
        <name>ATP</name>
        <dbReference type="ChEBI" id="CHEBI:30616"/>
    </ligand>
</feature>
<feature type="modified residue" description="Phosphoserine" evidence="6">
    <location>
        <position position="803"/>
    </location>
</feature>
<feature type="modified residue" description="N6-biotinyllysine" evidence="1 3">
    <location>
        <position position="1798"/>
    </location>
</feature>
<feature type="sequence conflict" description="In Ref. 1; AAC41643." evidence="5" ref="1">
    <original>P</original>
    <variation>R</variation>
    <location>
        <position position="96"/>
    </location>
</feature>
<feature type="sequence conflict" description="In Ref. 1; AAC41643." evidence="5" ref="1">
    <original>LKK</original>
    <variation>KKN</variation>
    <location>
        <begin position="256"/>
        <end position="258"/>
    </location>
</feature>
<feature type="sequence conflict" description="In Ref. 1; AAC41643." evidence="5" ref="1">
    <original>I</original>
    <variation>M</variation>
    <location>
        <position position="459"/>
    </location>
</feature>
<feature type="sequence conflict" description="In Ref. 1; AAC41643." evidence="5" ref="1">
    <original>E</original>
    <variation>K</variation>
    <location>
        <position position="830"/>
    </location>
</feature>
<feature type="sequence conflict" description="In Ref. 1; AAC41643." evidence="5" ref="1">
    <original>D</original>
    <variation>E</variation>
    <location>
        <position position="1395"/>
    </location>
</feature>
<comment type="function">
    <text>Hydrolysis of urea to ammonia and CO(2).</text>
</comment>
<comment type="catalytic activity">
    <reaction>
        <text>urea + hydrogencarbonate + ATP = urea-1-carboxylate + ADP + phosphate + H(+)</text>
        <dbReference type="Rhea" id="RHEA:20896"/>
        <dbReference type="ChEBI" id="CHEBI:15378"/>
        <dbReference type="ChEBI" id="CHEBI:15832"/>
        <dbReference type="ChEBI" id="CHEBI:16199"/>
        <dbReference type="ChEBI" id="CHEBI:17544"/>
        <dbReference type="ChEBI" id="CHEBI:30616"/>
        <dbReference type="ChEBI" id="CHEBI:43474"/>
        <dbReference type="ChEBI" id="CHEBI:456216"/>
        <dbReference type="EC" id="6.3.4.6"/>
    </reaction>
</comment>
<comment type="catalytic activity">
    <reaction>
        <text>urea-1-carboxylate + H2O + 3 H(+) = 2 NH4(+) + 2 CO2</text>
        <dbReference type="Rhea" id="RHEA:19029"/>
        <dbReference type="ChEBI" id="CHEBI:15377"/>
        <dbReference type="ChEBI" id="CHEBI:15378"/>
        <dbReference type="ChEBI" id="CHEBI:15832"/>
        <dbReference type="ChEBI" id="CHEBI:16526"/>
        <dbReference type="ChEBI" id="CHEBI:28938"/>
        <dbReference type="EC" id="3.5.1.54"/>
    </reaction>
</comment>
<comment type="cofactor">
    <cofactor>
        <name>biotin</name>
        <dbReference type="ChEBI" id="CHEBI:57586"/>
    </cofactor>
</comment>
<comment type="pathway">
    <text>Nitrogen metabolism; urea degradation; CO(2) and NH(3) from urea (allophanate route): step 1/2.</text>
</comment>
<comment type="pathway">
    <text>Nitrogen metabolism; urea degradation; CO(2) and NH(3) from urea (allophanate route): step 2/2.</text>
</comment>
<comment type="subunit">
    <text>Monomer.</text>
</comment>
<comment type="induction">
    <text>By allophanate or its non-metabolized analog oxalurate. Repressed in the presence of readily used nitrogen sources.</text>
</comment>
<comment type="miscellaneous">
    <text evidence="4">Present with 952 molecules/cell in log phase SD medium.</text>
</comment>
<dbReference type="EC" id="6.3.4.6"/>
<dbReference type="EC" id="3.5.1.54"/>
<dbReference type="EMBL" id="M64926">
    <property type="protein sequence ID" value="AAC41643.1"/>
    <property type="molecule type" value="Genomic_DNA"/>
</dbReference>
<dbReference type="EMBL" id="Z36077">
    <property type="protein sequence ID" value="CAA85172.1"/>
    <property type="molecule type" value="Genomic_DNA"/>
</dbReference>
<dbReference type="EMBL" id="Z21487">
    <property type="protein sequence ID" value="CAA79695.1"/>
    <property type="molecule type" value="Genomic_DNA"/>
</dbReference>
<dbReference type="EMBL" id="BK006936">
    <property type="protein sequence ID" value="DAA07325.1"/>
    <property type="molecule type" value="Genomic_DNA"/>
</dbReference>
<dbReference type="PIR" id="S46082">
    <property type="entry name" value="S46082"/>
</dbReference>
<dbReference type="SMR" id="P32528"/>
<dbReference type="BioGRID" id="32904">
    <property type="interactions" value="49"/>
</dbReference>
<dbReference type="DIP" id="DIP-6296N"/>
<dbReference type="FunCoup" id="P32528">
    <property type="interactions" value="205"/>
</dbReference>
<dbReference type="IntAct" id="P32528">
    <property type="interactions" value="11"/>
</dbReference>
<dbReference type="STRING" id="4932.YBR208C"/>
<dbReference type="iPTMnet" id="P32528"/>
<dbReference type="PaxDb" id="4932-YBR208C"/>
<dbReference type="PeptideAtlas" id="P32528"/>
<dbReference type="EnsemblFungi" id="YBR208C_mRNA">
    <property type="protein sequence ID" value="YBR208C"/>
    <property type="gene ID" value="YBR208C"/>
</dbReference>
<dbReference type="KEGG" id="sce:YBR208C"/>
<dbReference type="AGR" id="SGD:S000000412"/>
<dbReference type="SGD" id="S000000412">
    <property type="gene designation" value="DUR1,2"/>
</dbReference>
<dbReference type="VEuPathDB" id="FungiDB:YBR208C"/>
<dbReference type="eggNOG" id="KOG0238">
    <property type="taxonomic scope" value="Eukaryota"/>
</dbReference>
<dbReference type="eggNOG" id="KOG1211">
    <property type="taxonomic scope" value="Eukaryota"/>
</dbReference>
<dbReference type="HOGENOM" id="CLU_002162_4_1_1"/>
<dbReference type="InParanoid" id="P32528"/>
<dbReference type="OMA" id="GGMYMCI"/>
<dbReference type="OrthoDB" id="196847at2759"/>
<dbReference type="BioCyc" id="MetaCyc:YBR208C-MONOMER"/>
<dbReference type="BioCyc" id="YEAST:YBR208C-MONOMER"/>
<dbReference type="BRENDA" id="3.5.1.54">
    <property type="organism ID" value="984"/>
</dbReference>
<dbReference type="BRENDA" id="6.3.4.6">
    <property type="organism ID" value="984"/>
</dbReference>
<dbReference type="UniPathway" id="UPA00258">
    <property type="reaction ID" value="UER00371"/>
</dbReference>
<dbReference type="UniPathway" id="UPA00258">
    <property type="reaction ID" value="UER00372"/>
</dbReference>
<dbReference type="BioGRID-ORCS" id="852507">
    <property type="hits" value="0 hits in 10 CRISPR screens"/>
</dbReference>
<dbReference type="PRO" id="PR:P32528"/>
<dbReference type="Proteomes" id="UP000002311">
    <property type="component" value="Chromosome II"/>
</dbReference>
<dbReference type="RNAct" id="P32528">
    <property type="molecule type" value="protein"/>
</dbReference>
<dbReference type="GO" id="GO:0005737">
    <property type="term" value="C:cytoplasm"/>
    <property type="evidence" value="ECO:0007005"/>
    <property type="project" value="SGD"/>
</dbReference>
<dbReference type="GO" id="GO:0004039">
    <property type="term" value="F:allophanate hydrolase activity"/>
    <property type="evidence" value="ECO:0000315"/>
    <property type="project" value="SGD"/>
</dbReference>
<dbReference type="GO" id="GO:0005524">
    <property type="term" value="F:ATP binding"/>
    <property type="evidence" value="ECO:0007669"/>
    <property type="project" value="UniProtKB-KW"/>
</dbReference>
<dbReference type="GO" id="GO:0046872">
    <property type="term" value="F:metal ion binding"/>
    <property type="evidence" value="ECO:0007669"/>
    <property type="project" value="InterPro"/>
</dbReference>
<dbReference type="GO" id="GO:0004847">
    <property type="term" value="F:urea carboxylase activity"/>
    <property type="evidence" value="ECO:0000315"/>
    <property type="project" value="SGD"/>
</dbReference>
<dbReference type="GO" id="GO:0000256">
    <property type="term" value="P:allantoin catabolic process"/>
    <property type="evidence" value="ECO:0000304"/>
    <property type="project" value="SGD"/>
</dbReference>
<dbReference type="GO" id="GO:0043419">
    <property type="term" value="P:urea catabolic process"/>
    <property type="evidence" value="ECO:0000315"/>
    <property type="project" value="SGD"/>
</dbReference>
<dbReference type="CDD" id="cd06850">
    <property type="entry name" value="biotinyl_domain"/>
    <property type="match status" value="1"/>
</dbReference>
<dbReference type="FunFam" id="3.30.470.20:FF:000089">
    <property type="entry name" value="Dur1,2p"/>
    <property type="match status" value="1"/>
</dbReference>
<dbReference type="FunFam" id="1.20.58.1700:FF:000001">
    <property type="entry name" value="DUR1,2p Urea amidolyase"/>
    <property type="match status" value="1"/>
</dbReference>
<dbReference type="FunFam" id="2.40.100.10:FF:000042">
    <property type="entry name" value="Multifunctional urea amidolyase"/>
    <property type="match status" value="1"/>
</dbReference>
<dbReference type="FunFam" id="3.30.1360.40:FF:000019">
    <property type="entry name" value="Multifunctional urea amidolyase"/>
    <property type="match status" value="1"/>
</dbReference>
<dbReference type="FunFam" id="3.40.50.20:FF:000010">
    <property type="entry name" value="Propionyl-CoA carboxylase subunit alpha"/>
    <property type="match status" value="1"/>
</dbReference>
<dbReference type="FunFam" id="2.40.100.10:FF:000047">
    <property type="entry name" value="Urea amidolyase"/>
    <property type="match status" value="1"/>
</dbReference>
<dbReference type="FunFam" id="3.10.490.10:FF:000010">
    <property type="entry name" value="Urea amidolyase"/>
    <property type="match status" value="1"/>
</dbReference>
<dbReference type="Gene3D" id="1.20.58.1700">
    <property type="match status" value="1"/>
</dbReference>
<dbReference type="Gene3D" id="2.40.50.100">
    <property type="match status" value="1"/>
</dbReference>
<dbReference type="Gene3D" id="3.30.1360.40">
    <property type="match status" value="1"/>
</dbReference>
<dbReference type="Gene3D" id="3.90.1300.10">
    <property type="entry name" value="Amidase signature (AS) domain"/>
    <property type="match status" value="1"/>
</dbReference>
<dbReference type="Gene3D" id="3.30.470.20">
    <property type="entry name" value="ATP-grasp fold, B domain"/>
    <property type="match status" value="1"/>
</dbReference>
<dbReference type="Gene3D" id="2.40.100.10">
    <property type="entry name" value="Cyclophilin-like"/>
    <property type="match status" value="2"/>
</dbReference>
<dbReference type="Gene3D" id="3.10.490.10">
    <property type="entry name" value="Gamma-glutamyl cyclotransferase-like"/>
    <property type="match status" value="1"/>
</dbReference>
<dbReference type="InterPro" id="IPR053844">
    <property type="entry name" value="AH_C"/>
</dbReference>
<dbReference type="InterPro" id="IPR014085">
    <property type="entry name" value="Allophanate_hydrolase"/>
</dbReference>
<dbReference type="InterPro" id="IPR023631">
    <property type="entry name" value="Amidase_dom"/>
</dbReference>
<dbReference type="InterPro" id="IPR036928">
    <property type="entry name" value="AS_sf"/>
</dbReference>
<dbReference type="InterPro" id="IPR011761">
    <property type="entry name" value="ATP-grasp"/>
</dbReference>
<dbReference type="InterPro" id="IPR005481">
    <property type="entry name" value="BC-like_N"/>
</dbReference>
<dbReference type="InterPro" id="IPR001882">
    <property type="entry name" value="Biotin_BS"/>
</dbReference>
<dbReference type="InterPro" id="IPR050856">
    <property type="entry name" value="Biotin_carboxylase_complex"/>
</dbReference>
<dbReference type="InterPro" id="IPR011764">
    <property type="entry name" value="Biotin_carboxylation_dom"/>
</dbReference>
<dbReference type="InterPro" id="IPR005482">
    <property type="entry name" value="Biotin_COase_C"/>
</dbReference>
<dbReference type="InterPro" id="IPR000089">
    <property type="entry name" value="Biotin_lipoyl"/>
</dbReference>
<dbReference type="InterPro" id="IPR005479">
    <property type="entry name" value="CbamoylP_synth_lsu-like_ATP-bd"/>
</dbReference>
<dbReference type="InterPro" id="IPR003778">
    <property type="entry name" value="CT_A_B"/>
</dbReference>
<dbReference type="InterPro" id="IPR003833">
    <property type="entry name" value="CT_C_D"/>
</dbReference>
<dbReference type="InterPro" id="IPR029000">
    <property type="entry name" value="Cyclophilin-like_dom_sf"/>
</dbReference>
<dbReference type="InterPro" id="IPR016185">
    <property type="entry name" value="PreATP-grasp_dom_sf"/>
</dbReference>
<dbReference type="InterPro" id="IPR011054">
    <property type="entry name" value="Rudment_hybrid_motif"/>
</dbReference>
<dbReference type="InterPro" id="IPR011053">
    <property type="entry name" value="Single_hybrid_motif"/>
</dbReference>
<dbReference type="InterPro" id="IPR014084">
    <property type="entry name" value="Urea_COase"/>
</dbReference>
<dbReference type="NCBIfam" id="TIGR02713">
    <property type="entry name" value="allophanate_hyd"/>
    <property type="match status" value="1"/>
</dbReference>
<dbReference type="NCBIfam" id="NF006043">
    <property type="entry name" value="PRK08186.1"/>
    <property type="match status" value="1"/>
</dbReference>
<dbReference type="NCBIfam" id="TIGR00724">
    <property type="entry name" value="urea_amlyse_rel"/>
    <property type="match status" value="1"/>
</dbReference>
<dbReference type="NCBIfam" id="TIGR02712">
    <property type="entry name" value="urea_carbox"/>
    <property type="match status" value="1"/>
</dbReference>
<dbReference type="PANTHER" id="PTHR18866">
    <property type="entry name" value="CARBOXYLASE:PYRUVATE/ACETYL-COA/PROPIONYL-COA CARBOXYLASE"/>
    <property type="match status" value="1"/>
</dbReference>
<dbReference type="PANTHER" id="PTHR18866:SF128">
    <property type="entry name" value="UREA AMIDOLYASE"/>
    <property type="match status" value="1"/>
</dbReference>
<dbReference type="Pfam" id="PF21986">
    <property type="entry name" value="AH_C"/>
    <property type="match status" value="1"/>
</dbReference>
<dbReference type="Pfam" id="PF01425">
    <property type="entry name" value="Amidase"/>
    <property type="match status" value="1"/>
</dbReference>
<dbReference type="Pfam" id="PF02785">
    <property type="entry name" value="Biotin_carb_C"/>
    <property type="match status" value="1"/>
</dbReference>
<dbReference type="Pfam" id="PF00289">
    <property type="entry name" value="Biotin_carb_N"/>
    <property type="match status" value="1"/>
</dbReference>
<dbReference type="Pfam" id="PF00364">
    <property type="entry name" value="Biotin_lipoyl"/>
    <property type="match status" value="1"/>
</dbReference>
<dbReference type="Pfam" id="PF02786">
    <property type="entry name" value="CPSase_L_D2"/>
    <property type="match status" value="1"/>
</dbReference>
<dbReference type="Pfam" id="PF02626">
    <property type="entry name" value="CT_A_B"/>
    <property type="match status" value="1"/>
</dbReference>
<dbReference type="Pfam" id="PF02682">
    <property type="entry name" value="CT_C_D"/>
    <property type="match status" value="1"/>
</dbReference>
<dbReference type="SMART" id="SM00796">
    <property type="entry name" value="AHS1"/>
    <property type="match status" value="1"/>
</dbReference>
<dbReference type="SMART" id="SM00797">
    <property type="entry name" value="AHS2"/>
    <property type="match status" value="1"/>
</dbReference>
<dbReference type="SMART" id="SM00878">
    <property type="entry name" value="Biotin_carb_C"/>
    <property type="match status" value="1"/>
</dbReference>
<dbReference type="SUPFAM" id="SSF75304">
    <property type="entry name" value="Amidase signature (AS) enzymes"/>
    <property type="match status" value="1"/>
</dbReference>
<dbReference type="SUPFAM" id="SSF50891">
    <property type="entry name" value="Cyclophilin-like"/>
    <property type="match status" value="2"/>
</dbReference>
<dbReference type="SUPFAM" id="SSF56059">
    <property type="entry name" value="Glutathione synthetase ATP-binding domain-like"/>
    <property type="match status" value="1"/>
</dbReference>
<dbReference type="SUPFAM" id="SSF160467">
    <property type="entry name" value="PH0987 N-terminal domain-like"/>
    <property type="match status" value="1"/>
</dbReference>
<dbReference type="SUPFAM" id="SSF52440">
    <property type="entry name" value="PreATP-grasp domain"/>
    <property type="match status" value="1"/>
</dbReference>
<dbReference type="SUPFAM" id="SSF51246">
    <property type="entry name" value="Rudiment single hybrid motif"/>
    <property type="match status" value="1"/>
</dbReference>
<dbReference type="SUPFAM" id="SSF51230">
    <property type="entry name" value="Single hybrid motif"/>
    <property type="match status" value="1"/>
</dbReference>
<dbReference type="PROSITE" id="PS50975">
    <property type="entry name" value="ATP_GRASP"/>
    <property type="match status" value="1"/>
</dbReference>
<dbReference type="PROSITE" id="PS50979">
    <property type="entry name" value="BC"/>
    <property type="match status" value="1"/>
</dbReference>
<dbReference type="PROSITE" id="PS00188">
    <property type="entry name" value="BIOTIN"/>
    <property type="match status" value="1"/>
</dbReference>
<dbReference type="PROSITE" id="PS50968">
    <property type="entry name" value="BIOTINYL_LIPOYL"/>
    <property type="match status" value="1"/>
</dbReference>
<dbReference type="PROSITE" id="PS00866">
    <property type="entry name" value="CPSASE_1"/>
    <property type="match status" value="1"/>
</dbReference>
<dbReference type="PROSITE" id="PS00867">
    <property type="entry name" value="CPSASE_2"/>
    <property type="match status" value="1"/>
</dbReference>
<sequence>MTVSSDTTAEISLGWSIQDWIDFHKSSSSQASLRLLESLLDSQNVAPVDNAWISLISKENLLHQFQILKSRENKETLPLYGVPIAVKDNIDVRGLPTTAACPSFAYEPSKDSKVVELLRNAGAIIVGKTNLDQFATGLVGTRSPYGKTPCAFSKEHVSGGSSAGSASVVARGIVPIALGTDTAGSGRVPAALNNLIGLKPTKGVFSCQGVVPACKSLDCVSIFALNLSDAERCFRIMCQPDPDNDEYSRPYVSNPLKKFSSNVTIAIPKNIPWYGETKNPVLFSNAVENLSRTGANVIEIDFEPLLELARCLYEGTWVAERYQAIQSFLDSKPPKESLDPTVISIIEGAKKYSAVDCFSFEYKRQGILQKVRRLLESVDVLCVPTCPLNPTMQQVADEPVLVNSRQGTWTNFVNLADLAALAVPAGFRDDGLPNGITLIGKKFTDYALLELANRYFQNIFPNGSRTYGTFTSSSVKPANDQLVGPDYDPSTSIKLAVVGAHLKGLPLHWQLEKVNATYLCTTKTSKAYQLFALPKNGPVLKPGLRRVQDSNGSQIELEVYSVPKELFGAFISMVPEPLGIGSVELESGEWIKSFICEESGYKAKGTVDITKYGGFRAYFEMLKKKESQKKKLFDTVLIANRGEIAVRIIKTLKKLGIRSVAVYSDPDKYSQHVTDADVSVPLHGTTAAQTYLDMNKIIDAAKQTNAQAIIPGYGFLSENADFSDACTSAGITFVGPSGDIIRGLGLKHSARQIAQKAGVPLVPGSLLITSVEEAKKVAAELEYPVMVKSTAGGGGIGLQKVDSEEDIEHIFETVKHQGETFFGDAGVFLERFIENARHVEVQLMGDGFGKAIALGERDCSLQRRNQKVIEETPAPNLPEKTRLALRKAAESLGSLLNYKCAGTVEFIYDEKKDEFYFLEVNTRLQVEHPITEMVTGLDLVEWMIRIAANDAPDFDSTKVEVNGVSMEARLYAENPLKNFRPSPGLLVDVKFPDWARVDTWVKKGTNISPEYDPTLAKIIVHGKDRDDAISKLNQALEETKVYGCITNIDYLKSIITSDFFAKAKVSTNILNSYQYEPTAIEITLPGAHTSIQDYPGRVGYWRIGVPPSGPMDAYSFRLANRIVGNDYRTPAIEVTLTGPSIVFHCETVIAITGGTALCTLDGQEIPQHKPVEVKRGSTLSIGKLTSGCRAYLGIRGGIDVPKYLGSYSTFTLGNVGGYNGRVLKLGDVLFLPSNEENKSVECLPQNIPQSLIPQISETKEWRIGVTCGPHGSPDFFKPESIEEFFSEKWKVHYNSNRFGVRLIGPKPKWARSNGGEGGMHPSNTHDYVYSLGAINFTGDEPVIITCDGPSLGGFVCQAVVPEAELWKVGQVKPGDSIQFVPLSYESSRSLKESQDVAIKSLDGTKLRRLDSVSILPSFETPILAQMEKVNELSPKVVYRQAGDRYVLVEYGDNEMNFNISYRIECLISLVKKNKTIGIVEMSQGVRSVLIEFDGYKVTQKELLKVLVAYETEIQFDENWKITSNIIRLPMAFEDSKTLACVQRYQETIRSSAPWLPNNVDFIANVNGISRNEVYDMLYSARFMVLGLGDVFLGSPCAVPLDPRHRFLGSKYNPSRTYTERGAVGIGGMYMCIYAANSPGGYQLVGRTIPIWDKLCLAASSEVPWLMNPFDQVEFYPVSEEDLDKMTEDCDNGVYKVNIEKSVFDHQEYLRWINANKDSITAFQEGQLGERAEEFAKLIQNANSELKESVTVKPDEEEDFPEGAEIVYSEYSGRFWKSIASVGDVIEAGQGLLIIEAMKAEMIISAPKSGKIIKICHGNGDMVDSGDIVAVIETLA</sequence>
<reference key="1">
    <citation type="journal article" date="1991" name="DNA Seq.">
        <title>The urea amidolyase (DUR1,2) gene of Saccharomyces cerevisiae.</title>
        <authorList>
            <person name="Genbauffe F.S."/>
            <person name="Cooper T.G."/>
        </authorList>
    </citation>
    <scope>NUCLEOTIDE SEQUENCE [GENOMIC DNA]</scope>
</reference>
<reference key="2">
    <citation type="journal article" date="1994" name="EMBO J.">
        <title>Complete DNA sequence of yeast chromosome II.</title>
        <authorList>
            <person name="Feldmann H."/>
            <person name="Aigle M."/>
            <person name="Aljinovic G."/>
            <person name="Andre B."/>
            <person name="Baclet M.C."/>
            <person name="Barthe C."/>
            <person name="Baur A."/>
            <person name="Becam A.-M."/>
            <person name="Biteau N."/>
            <person name="Boles E."/>
            <person name="Brandt T."/>
            <person name="Brendel M."/>
            <person name="Brueckner M."/>
            <person name="Bussereau F."/>
            <person name="Christiansen C."/>
            <person name="Contreras R."/>
            <person name="Crouzet M."/>
            <person name="Cziepluch C."/>
            <person name="Demolis N."/>
            <person name="Delaveau T."/>
            <person name="Doignon F."/>
            <person name="Domdey H."/>
            <person name="Duesterhus S."/>
            <person name="Dubois E."/>
            <person name="Dujon B."/>
            <person name="El Bakkoury M."/>
            <person name="Entian K.-D."/>
            <person name="Feuermann M."/>
            <person name="Fiers W."/>
            <person name="Fobo G.M."/>
            <person name="Fritz C."/>
            <person name="Gassenhuber J."/>
            <person name="Glansdorff N."/>
            <person name="Goffeau A."/>
            <person name="Grivell L.A."/>
            <person name="de Haan M."/>
            <person name="Hein C."/>
            <person name="Herbert C.J."/>
            <person name="Hollenberg C.P."/>
            <person name="Holmstroem K."/>
            <person name="Jacq C."/>
            <person name="Jacquet M."/>
            <person name="Jauniaux J.-C."/>
            <person name="Jonniaux J.-L."/>
            <person name="Kallesoee T."/>
            <person name="Kiesau P."/>
            <person name="Kirchrath L."/>
            <person name="Koetter P."/>
            <person name="Korol S."/>
            <person name="Liebl S."/>
            <person name="Logghe M."/>
            <person name="Lohan A.J.E."/>
            <person name="Louis E.J."/>
            <person name="Li Z.Y."/>
            <person name="Maat M.J."/>
            <person name="Mallet L."/>
            <person name="Mannhaupt G."/>
            <person name="Messenguy F."/>
            <person name="Miosga T."/>
            <person name="Molemans F."/>
            <person name="Mueller S."/>
            <person name="Nasr F."/>
            <person name="Obermaier B."/>
            <person name="Perea J."/>
            <person name="Pierard A."/>
            <person name="Piravandi E."/>
            <person name="Pohl F.M."/>
            <person name="Pohl T.M."/>
            <person name="Potier S."/>
            <person name="Proft M."/>
            <person name="Purnelle B."/>
            <person name="Ramezani Rad M."/>
            <person name="Rieger M."/>
            <person name="Rose M."/>
            <person name="Schaaff-Gerstenschlaeger I."/>
            <person name="Scherens B."/>
            <person name="Schwarzlose C."/>
            <person name="Skala J."/>
            <person name="Slonimski P.P."/>
            <person name="Smits P.H.M."/>
            <person name="Souciet J.-L."/>
            <person name="Steensma H.Y."/>
            <person name="Stucka R."/>
            <person name="Urrestarazu L.A."/>
            <person name="van der Aart Q.J.M."/>
            <person name="Van Dyck L."/>
            <person name="Vassarotti A."/>
            <person name="Vetter I."/>
            <person name="Vierendeels F."/>
            <person name="Vissers S."/>
            <person name="Wagner G."/>
            <person name="de Wergifosse P."/>
            <person name="Wolfe K.H."/>
            <person name="Zagulski M."/>
            <person name="Zimmermann F.K."/>
            <person name="Mewes H.-W."/>
            <person name="Kleine K."/>
        </authorList>
    </citation>
    <scope>NUCLEOTIDE SEQUENCE [LARGE SCALE GENOMIC DNA]</scope>
    <source>
        <strain>ATCC 204508 / S288c</strain>
    </source>
</reference>
<reference key="3">
    <citation type="journal article" date="2014" name="G3 (Bethesda)">
        <title>The reference genome sequence of Saccharomyces cerevisiae: Then and now.</title>
        <authorList>
            <person name="Engel S.R."/>
            <person name="Dietrich F.S."/>
            <person name="Fisk D.G."/>
            <person name="Binkley G."/>
            <person name="Balakrishnan R."/>
            <person name="Costanzo M.C."/>
            <person name="Dwight S.S."/>
            <person name="Hitz B.C."/>
            <person name="Karra K."/>
            <person name="Nash R.S."/>
            <person name="Weng S."/>
            <person name="Wong E.D."/>
            <person name="Lloyd P."/>
            <person name="Skrzypek M.S."/>
            <person name="Miyasato S.R."/>
            <person name="Simison M."/>
            <person name="Cherry J.M."/>
        </authorList>
    </citation>
    <scope>GENOME REANNOTATION</scope>
    <source>
        <strain>ATCC 204508 / S288c</strain>
    </source>
</reference>
<reference key="4">
    <citation type="journal article" date="1993" name="Yeast">
        <title>A 12.8 kb segment, on the right arm of chromosome II from Saccharomyces cerevisiae including part of the DUR1,2 gene, contains five putative new genes.</title>
        <authorList>
            <person name="Bussereau F."/>
            <person name="Mallet L."/>
            <person name="Gaillon L."/>
            <person name="Jacquet M."/>
        </authorList>
    </citation>
    <scope>NUCLEOTIDE SEQUENCE [GENOMIC DNA] OF 1487-1835</scope>
    <source>
        <strain>ATCC 204508 / S288c</strain>
    </source>
</reference>
<reference key="5">
    <citation type="journal article" date="2003" name="Nature">
        <title>Global analysis of protein expression in yeast.</title>
        <authorList>
            <person name="Ghaemmaghami S."/>
            <person name="Huh W.-K."/>
            <person name="Bower K."/>
            <person name="Howson R.W."/>
            <person name="Belle A."/>
            <person name="Dephoure N."/>
            <person name="O'Shea E.K."/>
            <person name="Weissman J.S."/>
        </authorList>
    </citation>
    <scope>LEVEL OF PROTEIN EXPRESSION [LARGE SCALE ANALYSIS]</scope>
</reference>
<reference key="6">
    <citation type="journal article" date="2009" name="Science">
        <title>Global analysis of Cdk1 substrate phosphorylation sites provides insights into evolution.</title>
        <authorList>
            <person name="Holt L.J."/>
            <person name="Tuch B.B."/>
            <person name="Villen J."/>
            <person name="Johnson A.D."/>
            <person name="Gygi S.P."/>
            <person name="Morgan D.O."/>
        </authorList>
    </citation>
    <scope>PHOSPHORYLATION [LARGE SCALE ANALYSIS] AT SER-803</scope>
    <scope>IDENTIFICATION BY MASS SPECTROMETRY [LARGE SCALE ANALYSIS]</scope>
</reference>
<gene>
    <name type="primary">DUR1,2</name>
    <name type="ordered locus">YBR208C</name>
    <name type="ORF">YBR1448</name>
</gene>
<evidence type="ECO:0000250" key="1"/>
<evidence type="ECO:0000255" key="2">
    <source>
        <dbReference type="PROSITE-ProRule" id="PRU00409"/>
    </source>
</evidence>
<evidence type="ECO:0000255" key="3">
    <source>
        <dbReference type="PROSITE-ProRule" id="PRU01066"/>
    </source>
</evidence>
<evidence type="ECO:0000269" key="4">
    <source>
    </source>
</evidence>
<evidence type="ECO:0000305" key="5"/>
<evidence type="ECO:0007744" key="6">
    <source>
    </source>
</evidence>
<keyword id="KW-0067">ATP-binding</keyword>
<keyword id="KW-0092">Biotin</keyword>
<keyword id="KW-0378">Hydrolase</keyword>
<keyword id="KW-0436">Ligase</keyword>
<keyword id="KW-0511">Multifunctional enzyme</keyword>
<keyword id="KW-0547">Nucleotide-binding</keyword>
<keyword id="KW-0597">Phosphoprotein</keyword>
<keyword id="KW-1185">Reference proteome</keyword>
<protein>
    <recommendedName>
        <fullName>Urea amidolyase</fullName>
    </recommendedName>
    <domain>
        <recommendedName>
            <fullName>Urea carboxylase</fullName>
            <ecNumber>6.3.4.6</ecNumber>
        </recommendedName>
    </domain>
    <domain>
        <recommendedName>
            <fullName>Allophanate hydrolase</fullName>
            <ecNumber>3.5.1.54</ecNumber>
        </recommendedName>
    </domain>
</protein>
<name>DUR1_YEAST</name>
<organism>
    <name type="scientific">Saccharomyces cerevisiae (strain ATCC 204508 / S288c)</name>
    <name type="common">Baker's yeast</name>
    <dbReference type="NCBI Taxonomy" id="559292"/>
    <lineage>
        <taxon>Eukaryota</taxon>
        <taxon>Fungi</taxon>
        <taxon>Dikarya</taxon>
        <taxon>Ascomycota</taxon>
        <taxon>Saccharomycotina</taxon>
        <taxon>Saccharomycetes</taxon>
        <taxon>Saccharomycetales</taxon>
        <taxon>Saccharomycetaceae</taxon>
        <taxon>Saccharomyces</taxon>
    </lineage>
</organism>
<proteinExistence type="evidence at protein level"/>